<organism>
    <name type="scientific">Bos taurus</name>
    <name type="common">Bovine</name>
    <dbReference type="NCBI Taxonomy" id="9913"/>
    <lineage>
        <taxon>Eukaryota</taxon>
        <taxon>Metazoa</taxon>
        <taxon>Chordata</taxon>
        <taxon>Craniata</taxon>
        <taxon>Vertebrata</taxon>
        <taxon>Euteleostomi</taxon>
        <taxon>Mammalia</taxon>
        <taxon>Eutheria</taxon>
        <taxon>Laurasiatheria</taxon>
        <taxon>Artiodactyla</taxon>
        <taxon>Ruminantia</taxon>
        <taxon>Pecora</taxon>
        <taxon>Bovidae</taxon>
        <taxon>Bovinae</taxon>
        <taxon>Bos</taxon>
    </lineage>
</organism>
<proteinExistence type="evidence at transcript level"/>
<evidence type="ECO:0000250" key="1">
    <source>
        <dbReference type="UniProtKB" id="Q96CB8"/>
    </source>
</evidence>
<evidence type="ECO:0000255" key="2">
    <source>
        <dbReference type="PROSITE-ProRule" id="PRU00146"/>
    </source>
</evidence>
<evidence type="ECO:0000256" key="3">
    <source>
        <dbReference type="SAM" id="MobiDB-lite"/>
    </source>
</evidence>
<evidence type="ECO:0000305" key="4"/>
<keyword id="KW-1017">Isopeptide bond</keyword>
<keyword id="KW-0479">Metal-binding</keyword>
<keyword id="KW-0539">Nucleus</keyword>
<keyword id="KW-0597">Phosphoprotein</keyword>
<keyword id="KW-1185">Reference proteome</keyword>
<keyword id="KW-0832">Ubl conjugation</keyword>
<keyword id="KW-0862">Zinc</keyword>
<keyword id="KW-0863">Zinc-finger</keyword>
<accession>Q32LL5</accession>
<dbReference type="EMBL" id="BC109520">
    <property type="protein sequence ID" value="AAI09521.1"/>
    <property type="molecule type" value="mRNA"/>
</dbReference>
<dbReference type="RefSeq" id="NP_001069221.1">
    <property type="nucleotide sequence ID" value="NM_001075753.2"/>
</dbReference>
<dbReference type="RefSeq" id="XP_005207666.1">
    <property type="nucleotide sequence ID" value="XM_005207609.5"/>
</dbReference>
<dbReference type="SMR" id="Q32LL5"/>
<dbReference type="FunCoup" id="Q32LL5">
    <property type="interactions" value="3939"/>
</dbReference>
<dbReference type="STRING" id="9913.ENSBTAP00000044968"/>
<dbReference type="PaxDb" id="9913-ENSBTAP00000044968"/>
<dbReference type="Ensembl" id="ENSBTAT00000047799.5">
    <property type="protein sequence ID" value="ENSBTAP00000044968.3"/>
    <property type="gene ID" value="ENSBTAG00000033648.5"/>
</dbReference>
<dbReference type="GeneID" id="517489"/>
<dbReference type="KEGG" id="bta:517489"/>
<dbReference type="CTD" id="57117"/>
<dbReference type="VEuPathDB" id="HostDB:ENSBTAG00000033648"/>
<dbReference type="VGNC" id="VGNC:30225">
    <property type="gene designation" value="INTS12"/>
</dbReference>
<dbReference type="eggNOG" id="KOG4323">
    <property type="taxonomic scope" value="Eukaryota"/>
</dbReference>
<dbReference type="GeneTree" id="ENSGT00390000005218"/>
<dbReference type="HOGENOM" id="CLU_033336_0_0_1"/>
<dbReference type="InParanoid" id="Q32LL5"/>
<dbReference type="OMA" id="QECHCLY"/>
<dbReference type="OrthoDB" id="5846437at2759"/>
<dbReference type="TreeFam" id="TF106418"/>
<dbReference type="Reactome" id="R-BTA-6807505">
    <property type="pathway name" value="RNA polymerase II transcribes snRNA genes"/>
</dbReference>
<dbReference type="Proteomes" id="UP000009136">
    <property type="component" value="Chromosome 6"/>
</dbReference>
<dbReference type="Bgee" id="ENSBTAG00000033648">
    <property type="expression patterns" value="Expressed in semen and 107 other cell types or tissues"/>
</dbReference>
<dbReference type="GO" id="GO:0032039">
    <property type="term" value="C:integrator complex"/>
    <property type="evidence" value="ECO:0000318"/>
    <property type="project" value="GO_Central"/>
</dbReference>
<dbReference type="GO" id="GO:0005634">
    <property type="term" value="C:nucleus"/>
    <property type="evidence" value="ECO:0000250"/>
    <property type="project" value="UniProtKB"/>
</dbReference>
<dbReference type="GO" id="GO:0008270">
    <property type="term" value="F:zinc ion binding"/>
    <property type="evidence" value="ECO:0007669"/>
    <property type="project" value="UniProtKB-KW"/>
</dbReference>
<dbReference type="GO" id="GO:0034472">
    <property type="term" value="P:snRNA 3'-end processing"/>
    <property type="evidence" value="ECO:0000318"/>
    <property type="project" value="GO_Central"/>
</dbReference>
<dbReference type="CDD" id="cd15501">
    <property type="entry name" value="PHD_Int12"/>
    <property type="match status" value="1"/>
</dbReference>
<dbReference type="FunFam" id="3.30.40.10:FF:000101">
    <property type="entry name" value="Integrator complex subunit 12"/>
    <property type="match status" value="1"/>
</dbReference>
<dbReference type="Gene3D" id="3.30.40.10">
    <property type="entry name" value="Zinc/RING finger domain, C3HC4 (zinc finger)"/>
    <property type="match status" value="1"/>
</dbReference>
<dbReference type="InterPro" id="IPR039054">
    <property type="entry name" value="Int12_PHD"/>
</dbReference>
<dbReference type="InterPro" id="IPR051776">
    <property type="entry name" value="Integrator_subunit_12"/>
</dbReference>
<dbReference type="InterPro" id="IPR019786">
    <property type="entry name" value="Zinc_finger_PHD-type_CS"/>
</dbReference>
<dbReference type="InterPro" id="IPR011011">
    <property type="entry name" value="Znf_FYVE_PHD"/>
</dbReference>
<dbReference type="InterPro" id="IPR001965">
    <property type="entry name" value="Znf_PHD"/>
</dbReference>
<dbReference type="InterPro" id="IPR019787">
    <property type="entry name" value="Znf_PHD-finger"/>
</dbReference>
<dbReference type="InterPro" id="IPR013083">
    <property type="entry name" value="Znf_RING/FYVE/PHD"/>
</dbReference>
<dbReference type="PANTHER" id="PTHR13415:SF5">
    <property type="entry name" value="INTEGRATOR COMPLEX SUBUNIT 12"/>
    <property type="match status" value="1"/>
</dbReference>
<dbReference type="PANTHER" id="PTHR13415">
    <property type="entry name" value="NUCLEAR FACTOR-RELATED"/>
    <property type="match status" value="1"/>
</dbReference>
<dbReference type="Pfam" id="PF00628">
    <property type="entry name" value="PHD"/>
    <property type="match status" value="1"/>
</dbReference>
<dbReference type="SMART" id="SM00249">
    <property type="entry name" value="PHD"/>
    <property type="match status" value="1"/>
</dbReference>
<dbReference type="SUPFAM" id="SSF57903">
    <property type="entry name" value="FYVE/PHD zinc finger"/>
    <property type="match status" value="1"/>
</dbReference>
<dbReference type="PROSITE" id="PS01359">
    <property type="entry name" value="ZF_PHD_1"/>
    <property type="match status" value="1"/>
</dbReference>
<dbReference type="PROSITE" id="PS50016">
    <property type="entry name" value="ZF_PHD_2"/>
    <property type="match status" value="1"/>
</dbReference>
<comment type="function">
    <text evidence="1">Component of the integrator complex, a multiprotein complex that terminates RNA polymerase II (Pol II) transcription in the promoter-proximal region of genes. The integrator complex provides a quality checkpoint during transcription elongation by driving premature transcription termination of transcripts that are unfavorably configured for transcriptional elongation: the complex terminates transcription by (1) catalyzing dephosphorylation of the C-terminal domain (CTD) of Pol II subunit POLR2A/RPB1 and SUPT5H/SPT5, (2) degrading the exiting nascent RNA transcript via endonuclease activity and (3) promoting the release of Pol II from bound DNA. The integrator complex is also involved in terminating the synthesis of non-coding Pol II transcripts, such as enhancer RNAs (eRNAs), small nuclear RNAs (snRNAs), telomerase RNAs and long non-coding RNAs (lncRNAs). Mediates recruitment of cytoplasmic dynein to the nuclear envelope, probably as component of the integrator complex.</text>
</comment>
<comment type="subunit">
    <text evidence="1">Component of the Integrator complex, composed of core subunits INTS1, INTS2, INTS3, INTS4, INTS5, INTS6, INTS7, INTS8, INTS9/RC74, INTS10, INTS11/CPSF3L, INTS12, INTS13, INTS14 and INTS15. The core complex associates with protein phosphatase 2A subunits PPP2CA and PPP2R1A, to form the Integrator-PP2A (INTAC) complex.</text>
</comment>
<comment type="subcellular location">
    <subcellularLocation>
        <location evidence="1">Nucleus</location>
    </subcellularLocation>
</comment>
<comment type="PTM">
    <text evidence="1">Dephosphorylated at Ser-128 by the PNUTS-PP1 complex, promoting RNA polymerase II transcription pause-release.</text>
</comment>
<comment type="similarity">
    <text evidence="4">Belongs to the Integrator subunit 12 family.</text>
</comment>
<name>INT12_BOVIN</name>
<reference key="1">
    <citation type="submission" date="2005-11" db="EMBL/GenBank/DDBJ databases">
        <authorList>
            <consortium name="NIH - Mammalian Gene Collection (MGC) project"/>
        </authorList>
    </citation>
    <scope>NUCLEOTIDE SEQUENCE [LARGE SCALE MRNA]</scope>
    <source>
        <strain>Crossbred X Angus</strain>
        <tissue>Liver</tissue>
    </source>
</reference>
<gene>
    <name type="primary">INTS12</name>
    <name type="synonym">PHF22</name>
</gene>
<sequence>MAAAVNLELDPIFLKALGFLHSKSKDSAEKLKTLLDESLARGIDSSYRPSQKDVEPPKISSTKTVSVKQEPKTSSSLPSGNNNGKVLTTEKVKKEGEKRPADKMKSDITEGADVPKKPRLEKPETRSSPITVQTSKDLAMADLSSFEETSADDFAMEMGLACVVCRQMTVASGNQLVECQECHNLYHQDCHKPQVTDKEVTDPRLVWYCARCTRQMKRMAQKTQKPPQKPAPTVVSVAPAVKDPLVKKPETKLKPETTFLAFKRSEVKASTVVSGNSSSTNVSSSATSGLIGWAAFAAKTTSAGPSTAKLSSAAQNNSGKPATSSANQKPVGLTGLATTSKGGIGSKIGSSNSTSPTVPLKPPPPLTLGKTGLSRSVSCDNVSKVGLPSPSSLVPGSSSQLSGNGNSGTSGPSGSTTNKTASEPSTSPSASLKGPTSQESQLNAMKRLQMVKKKAAQKKLKK</sequence>
<feature type="chain" id="PRO_0000259569" description="Integrator complex subunit 12">
    <location>
        <begin position="1"/>
        <end position="462"/>
    </location>
</feature>
<feature type="zinc finger region" description="PHD-type" evidence="2">
    <location>
        <begin position="159"/>
        <end position="215"/>
    </location>
</feature>
<feature type="region of interest" description="Disordered" evidence="3">
    <location>
        <begin position="39"/>
        <end position="132"/>
    </location>
</feature>
<feature type="region of interest" description="Disordered" evidence="3">
    <location>
        <begin position="305"/>
        <end position="462"/>
    </location>
</feature>
<feature type="compositionally biased region" description="Polar residues" evidence="3">
    <location>
        <begin position="59"/>
        <end position="86"/>
    </location>
</feature>
<feature type="compositionally biased region" description="Basic and acidic residues" evidence="3">
    <location>
        <begin position="88"/>
        <end position="125"/>
    </location>
</feature>
<feature type="compositionally biased region" description="Polar residues" evidence="3">
    <location>
        <begin position="305"/>
        <end position="328"/>
    </location>
</feature>
<feature type="compositionally biased region" description="Low complexity" evidence="3">
    <location>
        <begin position="347"/>
        <end position="358"/>
    </location>
</feature>
<feature type="compositionally biased region" description="Low complexity" evidence="3">
    <location>
        <begin position="382"/>
        <end position="431"/>
    </location>
</feature>
<feature type="compositionally biased region" description="Polar residues" evidence="3">
    <location>
        <begin position="434"/>
        <end position="443"/>
    </location>
</feature>
<feature type="compositionally biased region" description="Basic residues" evidence="3">
    <location>
        <begin position="449"/>
        <end position="462"/>
    </location>
</feature>
<feature type="modified residue" description="Phosphoserine" evidence="1">
    <location>
        <position position="128"/>
    </location>
</feature>
<feature type="cross-link" description="Glycyl lysine isopeptide (Lys-Gly) (interchain with G-Cter in SUMO2)" evidence="1">
    <location>
        <position position="68"/>
    </location>
</feature>
<feature type="cross-link" description="Glycyl lysine isopeptide (Lys-Gly) (interchain with G-Cter in SUMO2)" evidence="1">
    <location>
        <position position="254"/>
    </location>
</feature>
<protein>
    <recommendedName>
        <fullName>Integrator complex subunit 12</fullName>
        <shortName>Int12</shortName>
    </recommendedName>
    <alternativeName>
        <fullName>PHD finger protein 22</fullName>
    </alternativeName>
</protein>